<feature type="chain" id="PRO_1000058465" description="Protease HtpX homolog">
    <location>
        <begin position="1"/>
        <end position="298"/>
    </location>
</feature>
<feature type="transmembrane region" description="Helical" evidence="1">
    <location>
        <begin position="14"/>
        <end position="34"/>
    </location>
</feature>
<feature type="transmembrane region" description="Helical" evidence="1">
    <location>
        <begin position="39"/>
        <end position="59"/>
    </location>
</feature>
<feature type="transmembrane region" description="Helical" evidence="1">
    <location>
        <begin position="159"/>
        <end position="179"/>
    </location>
</feature>
<feature type="transmembrane region" description="Helical" evidence="1">
    <location>
        <begin position="195"/>
        <end position="215"/>
    </location>
</feature>
<feature type="active site" evidence="1">
    <location>
        <position position="145"/>
    </location>
</feature>
<feature type="binding site" evidence="1">
    <location>
        <position position="144"/>
    </location>
    <ligand>
        <name>Zn(2+)</name>
        <dbReference type="ChEBI" id="CHEBI:29105"/>
        <note>catalytic</note>
    </ligand>
</feature>
<feature type="binding site" evidence="1">
    <location>
        <position position="148"/>
    </location>
    <ligand>
        <name>Zn(2+)</name>
        <dbReference type="ChEBI" id="CHEBI:29105"/>
        <note>catalytic</note>
    </ligand>
</feature>
<feature type="binding site" evidence="1">
    <location>
        <position position="224"/>
    </location>
    <ligand>
        <name>Zn(2+)</name>
        <dbReference type="ChEBI" id="CHEBI:29105"/>
        <note>catalytic</note>
    </ligand>
</feature>
<name>HTPX_LIMRD</name>
<evidence type="ECO:0000255" key="1">
    <source>
        <dbReference type="HAMAP-Rule" id="MF_00188"/>
    </source>
</evidence>
<sequence length="298" mass="32779">MLYQQIARNKRKTILVMFGFFVLLALIGAAIGYLFARTVIGGMIIAAIIAVIYMSVIIGQSTDVVMRMNNATEVRSASDAPELWHIVEDMALVARVPMPKVYIIHDPSPNAFATGNDPEHAAVAATTGLMEKMNREELEGVMAHEMTHVRNYDIRLQTIALALASAIAMLVNFAGNFWWIGGRSSSDDRDNPSSIFAILGSILLIILAPLAATIAQMALSRNREYLADAGAVELTRNPQGMISALEKLKTAVPMKHVDPSSSALYISDPEKNAKHHPFSNLFDTHPPLDKRIERLRQM</sequence>
<protein>
    <recommendedName>
        <fullName evidence="1">Protease HtpX homolog</fullName>
        <ecNumber evidence="1">3.4.24.-</ecNumber>
    </recommendedName>
</protein>
<dbReference type="EC" id="3.4.24.-" evidence="1"/>
<dbReference type="EMBL" id="CP000705">
    <property type="protein sequence ID" value="ABQ82512.1"/>
    <property type="molecule type" value="Genomic_DNA"/>
</dbReference>
<dbReference type="RefSeq" id="WP_003667235.1">
    <property type="nucleotide sequence ID" value="NC_009513.1"/>
</dbReference>
<dbReference type="SMR" id="A5VI38"/>
<dbReference type="STRING" id="557436.Lreu_0242"/>
<dbReference type="KEGG" id="lre:Lreu_0242"/>
<dbReference type="PATRIC" id="fig|557436.17.peg.1287"/>
<dbReference type="eggNOG" id="COG0501">
    <property type="taxonomic scope" value="Bacteria"/>
</dbReference>
<dbReference type="HOGENOM" id="CLU_042266_2_1_9"/>
<dbReference type="Proteomes" id="UP000001991">
    <property type="component" value="Chromosome"/>
</dbReference>
<dbReference type="GO" id="GO:0005886">
    <property type="term" value="C:plasma membrane"/>
    <property type="evidence" value="ECO:0007669"/>
    <property type="project" value="UniProtKB-SubCell"/>
</dbReference>
<dbReference type="GO" id="GO:0004222">
    <property type="term" value="F:metalloendopeptidase activity"/>
    <property type="evidence" value="ECO:0007669"/>
    <property type="project" value="UniProtKB-UniRule"/>
</dbReference>
<dbReference type="GO" id="GO:0008270">
    <property type="term" value="F:zinc ion binding"/>
    <property type="evidence" value="ECO:0007669"/>
    <property type="project" value="UniProtKB-UniRule"/>
</dbReference>
<dbReference type="GO" id="GO:0006508">
    <property type="term" value="P:proteolysis"/>
    <property type="evidence" value="ECO:0007669"/>
    <property type="project" value="UniProtKB-KW"/>
</dbReference>
<dbReference type="CDD" id="cd07340">
    <property type="entry name" value="M48B_Htpx_like"/>
    <property type="match status" value="1"/>
</dbReference>
<dbReference type="Gene3D" id="3.30.2010.10">
    <property type="entry name" value="Metalloproteases ('zincins'), catalytic domain"/>
    <property type="match status" value="1"/>
</dbReference>
<dbReference type="HAMAP" id="MF_00188">
    <property type="entry name" value="Pept_M48_protease_HtpX"/>
    <property type="match status" value="1"/>
</dbReference>
<dbReference type="InterPro" id="IPR050083">
    <property type="entry name" value="HtpX_protease"/>
</dbReference>
<dbReference type="InterPro" id="IPR022919">
    <property type="entry name" value="Pept_M48_protease_HtpX"/>
</dbReference>
<dbReference type="InterPro" id="IPR001915">
    <property type="entry name" value="Peptidase_M48"/>
</dbReference>
<dbReference type="NCBIfam" id="NF003425">
    <property type="entry name" value="PRK04897.1"/>
    <property type="match status" value="1"/>
</dbReference>
<dbReference type="PANTHER" id="PTHR43221">
    <property type="entry name" value="PROTEASE HTPX"/>
    <property type="match status" value="1"/>
</dbReference>
<dbReference type="PANTHER" id="PTHR43221:SF1">
    <property type="entry name" value="PROTEASE HTPX"/>
    <property type="match status" value="1"/>
</dbReference>
<dbReference type="Pfam" id="PF01435">
    <property type="entry name" value="Peptidase_M48"/>
    <property type="match status" value="1"/>
</dbReference>
<gene>
    <name evidence="1" type="primary">htpX</name>
    <name type="ordered locus">Lreu_0242</name>
</gene>
<proteinExistence type="inferred from homology"/>
<accession>A5VI38</accession>
<reference key="1">
    <citation type="journal article" date="2011" name="PLoS Genet.">
        <title>The evolution of host specialization in the vertebrate gut symbiont Lactobacillus reuteri.</title>
        <authorList>
            <person name="Frese S.A."/>
            <person name="Benson A.K."/>
            <person name="Tannock G.W."/>
            <person name="Loach D.M."/>
            <person name="Kim J."/>
            <person name="Zhang M."/>
            <person name="Oh P.L."/>
            <person name="Heng N.C."/>
            <person name="Patil P.B."/>
            <person name="Juge N."/>
            <person name="Mackenzie D.A."/>
            <person name="Pearson B.M."/>
            <person name="Lapidus A."/>
            <person name="Dalin E."/>
            <person name="Tice H."/>
            <person name="Goltsman E."/>
            <person name="Land M."/>
            <person name="Hauser L."/>
            <person name="Ivanova N."/>
            <person name="Kyrpides N.C."/>
            <person name="Walter J."/>
        </authorList>
    </citation>
    <scope>NUCLEOTIDE SEQUENCE [LARGE SCALE GENOMIC DNA]</scope>
    <source>
        <strain>DSM 20016</strain>
    </source>
</reference>
<organism>
    <name type="scientific">Limosilactobacillus reuteri (strain DSM 20016)</name>
    <name type="common">Lactobacillus reuteri</name>
    <dbReference type="NCBI Taxonomy" id="557436"/>
    <lineage>
        <taxon>Bacteria</taxon>
        <taxon>Bacillati</taxon>
        <taxon>Bacillota</taxon>
        <taxon>Bacilli</taxon>
        <taxon>Lactobacillales</taxon>
        <taxon>Lactobacillaceae</taxon>
        <taxon>Limosilactobacillus</taxon>
    </lineage>
</organism>
<keyword id="KW-1003">Cell membrane</keyword>
<keyword id="KW-0378">Hydrolase</keyword>
<keyword id="KW-0472">Membrane</keyword>
<keyword id="KW-0479">Metal-binding</keyword>
<keyword id="KW-0482">Metalloprotease</keyword>
<keyword id="KW-0645">Protease</keyword>
<keyword id="KW-1185">Reference proteome</keyword>
<keyword id="KW-0812">Transmembrane</keyword>
<keyword id="KW-1133">Transmembrane helix</keyword>
<keyword id="KW-0862">Zinc</keyword>
<comment type="cofactor">
    <cofactor evidence="1">
        <name>Zn(2+)</name>
        <dbReference type="ChEBI" id="CHEBI:29105"/>
    </cofactor>
    <text evidence="1">Binds 1 zinc ion per subunit.</text>
</comment>
<comment type="subcellular location">
    <subcellularLocation>
        <location evidence="1">Cell membrane</location>
        <topology evidence="1">Multi-pass membrane protein</topology>
    </subcellularLocation>
</comment>
<comment type="similarity">
    <text evidence="1">Belongs to the peptidase M48B family.</text>
</comment>